<gene>
    <name type="primary">WDR18</name>
</gene>
<evidence type="ECO:0000250" key="1">
    <source>
        <dbReference type="UniProtKB" id="A0A1L8HX76"/>
    </source>
</evidence>
<evidence type="ECO:0000250" key="2">
    <source>
        <dbReference type="UniProtKB" id="Q4VBE8"/>
    </source>
</evidence>
<evidence type="ECO:0000250" key="3">
    <source>
        <dbReference type="UniProtKB" id="Q68EI0"/>
    </source>
</evidence>
<evidence type="ECO:0000250" key="4">
    <source>
        <dbReference type="UniProtKB" id="Q9BV38"/>
    </source>
</evidence>
<evidence type="ECO:0000305" key="5"/>
<comment type="function">
    <text evidence="3 4">Functions as a component of the Five Friends of Methylated CHTOP (5FMC) complex; the 5FMC complex is recruited to ZNF148 by methylated CHTOP, leading to desumoylation of ZNF148 and subsequent transactivation of ZNF148 target genes (By similarity). Component of the PELP1 complex involved in the nucleolar steps of 28S rRNA maturation and the subsequent nucleoplasmic transit of the pre-60S ribosomal subunit (By similarity). May play a role during development (By similarity).</text>
</comment>
<comment type="subunit">
    <text evidence="4">Component of the 5FMC complex, at least composed of PELP1, LAS1L, TEX10, WDR18 and SENP3; the complex interacts with methylated CHTOP and ZNF148. Interacts with NOL9. Component of the PELP1 complex, composed of at least PELP1, TEX10 and WDR18. The complex interacts with pre-60S ribosome particles.</text>
</comment>
<comment type="subcellular location">
    <subcellularLocation>
        <location evidence="4">Nucleus</location>
        <location evidence="4">Nucleolus</location>
    </subcellularLocation>
    <subcellularLocation>
        <location evidence="2">Nucleus</location>
        <location evidence="2">Nucleoplasm</location>
    </subcellularLocation>
    <subcellularLocation>
        <location evidence="2">Cytoplasm</location>
    </subcellularLocation>
    <subcellularLocation>
        <location evidence="1">Dynein axonemal particle</location>
    </subcellularLocation>
    <text evidence="2">Mainly found in the nucleoplasm, with low levels detected in the cytoplasmic and chromatin fractions.</text>
</comment>
<comment type="similarity">
    <text evidence="5">Belongs to the WD repeat IPI3/WDR18 family.</text>
</comment>
<name>WDR18_BOVIN</name>
<reference key="1">
    <citation type="submission" date="2005-08" db="EMBL/GenBank/DDBJ databases">
        <authorList>
            <consortium name="NIH - Mammalian Gene Collection (MGC) project"/>
        </authorList>
    </citation>
    <scope>NUCLEOTIDE SEQUENCE [LARGE SCALE MRNA]</scope>
    <source>
        <strain>Crossbred X Angus</strain>
        <tissue>Ileum</tissue>
    </source>
</reference>
<dbReference type="EMBL" id="BC102946">
    <property type="protein sequence ID" value="AAI02947.1"/>
    <property type="molecule type" value="mRNA"/>
</dbReference>
<dbReference type="RefSeq" id="NP_001029760.1">
    <property type="nucleotide sequence ID" value="NM_001034588.1"/>
</dbReference>
<dbReference type="SMR" id="Q3SZD4"/>
<dbReference type="FunCoup" id="Q3SZD4">
    <property type="interactions" value="2290"/>
</dbReference>
<dbReference type="STRING" id="9913.ENSBTAP00000003156"/>
<dbReference type="PaxDb" id="9913-ENSBTAP00000003156"/>
<dbReference type="Ensembl" id="ENSBTAT00000003156.5">
    <property type="protein sequence ID" value="ENSBTAP00000003156.5"/>
    <property type="gene ID" value="ENSBTAG00000002434.5"/>
</dbReference>
<dbReference type="GeneID" id="533356"/>
<dbReference type="KEGG" id="bta:533356"/>
<dbReference type="CTD" id="57418"/>
<dbReference type="VGNC" id="VGNC:36885">
    <property type="gene designation" value="WDR18"/>
</dbReference>
<dbReference type="eggNOG" id="KOG0646">
    <property type="taxonomic scope" value="Eukaryota"/>
</dbReference>
<dbReference type="GeneTree" id="ENSGT00390000000289"/>
<dbReference type="HOGENOM" id="CLU_029749_0_0_1"/>
<dbReference type="InParanoid" id="Q3SZD4"/>
<dbReference type="OrthoDB" id="756370at2759"/>
<dbReference type="TreeFam" id="TF313046"/>
<dbReference type="CD-CODE" id="D7FE2080">
    <property type="entry name" value="Nucleolus"/>
</dbReference>
<dbReference type="Proteomes" id="UP000009136">
    <property type="component" value="Chromosome 7"/>
</dbReference>
<dbReference type="GO" id="GO:0120293">
    <property type="term" value="C:dynein axonemal particle"/>
    <property type="evidence" value="ECO:0000250"/>
    <property type="project" value="UniProtKB"/>
</dbReference>
<dbReference type="GO" id="GO:0005656">
    <property type="term" value="C:nuclear pre-replicative complex"/>
    <property type="evidence" value="ECO:0000318"/>
    <property type="project" value="GO_Central"/>
</dbReference>
<dbReference type="GO" id="GO:0005730">
    <property type="term" value="C:nucleolus"/>
    <property type="evidence" value="ECO:0007669"/>
    <property type="project" value="UniProtKB-SubCell"/>
</dbReference>
<dbReference type="GO" id="GO:0120330">
    <property type="term" value="C:rixosome complex"/>
    <property type="evidence" value="ECO:0000318"/>
    <property type="project" value="GO_Central"/>
</dbReference>
<dbReference type="GO" id="GO:0006261">
    <property type="term" value="P:DNA-templated DNA replication"/>
    <property type="evidence" value="ECO:0000318"/>
    <property type="project" value="GO_Central"/>
</dbReference>
<dbReference type="GO" id="GO:0006364">
    <property type="term" value="P:rRNA processing"/>
    <property type="evidence" value="ECO:0000318"/>
    <property type="project" value="GO_Central"/>
</dbReference>
<dbReference type="FunFam" id="2.130.10.10:FF:000420">
    <property type="entry name" value="WD repeat-containing protein 18"/>
    <property type="match status" value="1"/>
</dbReference>
<dbReference type="FunFam" id="2.130.10.10:FF:000702">
    <property type="entry name" value="WD repeat-containing protein 18"/>
    <property type="match status" value="1"/>
</dbReference>
<dbReference type="Gene3D" id="2.130.10.10">
    <property type="entry name" value="YVTN repeat-like/Quinoprotein amine dehydrogenase"/>
    <property type="match status" value="2"/>
</dbReference>
<dbReference type="InterPro" id="IPR020472">
    <property type="entry name" value="G-protein_beta_WD-40_rep"/>
</dbReference>
<dbReference type="InterPro" id="IPR015943">
    <property type="entry name" value="WD40/YVTN_repeat-like_dom_sf"/>
</dbReference>
<dbReference type="InterPro" id="IPR019775">
    <property type="entry name" value="WD40_repeat_CS"/>
</dbReference>
<dbReference type="InterPro" id="IPR036322">
    <property type="entry name" value="WD40_repeat_dom_sf"/>
</dbReference>
<dbReference type="InterPro" id="IPR001680">
    <property type="entry name" value="WD40_rpt"/>
</dbReference>
<dbReference type="InterPro" id="IPR045227">
    <property type="entry name" value="WDR18/Ipi3/RID3"/>
</dbReference>
<dbReference type="InterPro" id="IPR026987">
    <property type="entry name" value="Wdr18_C_dom"/>
</dbReference>
<dbReference type="PANTHER" id="PTHR18763:SF0">
    <property type="entry name" value="WD REPEAT-CONTAINING PROTEIN 18"/>
    <property type="match status" value="1"/>
</dbReference>
<dbReference type="PANTHER" id="PTHR18763">
    <property type="entry name" value="WD-REPEAT PROTEIN 18"/>
    <property type="match status" value="1"/>
</dbReference>
<dbReference type="Pfam" id="PF00400">
    <property type="entry name" value="WD40"/>
    <property type="match status" value="3"/>
</dbReference>
<dbReference type="Pfam" id="PF14077">
    <property type="entry name" value="WD40_alt"/>
    <property type="match status" value="1"/>
</dbReference>
<dbReference type="PRINTS" id="PR00320">
    <property type="entry name" value="GPROTEINBRPT"/>
</dbReference>
<dbReference type="SMART" id="SM00320">
    <property type="entry name" value="WD40"/>
    <property type="match status" value="5"/>
</dbReference>
<dbReference type="SUPFAM" id="SSF50978">
    <property type="entry name" value="WD40 repeat-like"/>
    <property type="match status" value="1"/>
</dbReference>
<dbReference type="PROSITE" id="PS00678">
    <property type="entry name" value="WD_REPEATS_1"/>
    <property type="match status" value="2"/>
</dbReference>
<dbReference type="PROSITE" id="PS50082">
    <property type="entry name" value="WD_REPEATS_2"/>
    <property type="match status" value="3"/>
</dbReference>
<dbReference type="PROSITE" id="PS50294">
    <property type="entry name" value="WD_REPEATS_REGION"/>
    <property type="match status" value="1"/>
</dbReference>
<keyword id="KW-0963">Cytoplasm</keyword>
<keyword id="KW-0217">Developmental protein</keyword>
<keyword id="KW-0539">Nucleus</keyword>
<keyword id="KW-1185">Reference proteome</keyword>
<keyword id="KW-0677">Repeat</keyword>
<keyword id="KW-0853">WD repeat</keyword>
<protein>
    <recommendedName>
        <fullName>WD repeat-containing protein 18</fullName>
    </recommendedName>
</protein>
<organism>
    <name type="scientific">Bos taurus</name>
    <name type="common">Bovine</name>
    <dbReference type="NCBI Taxonomy" id="9913"/>
    <lineage>
        <taxon>Eukaryota</taxon>
        <taxon>Metazoa</taxon>
        <taxon>Chordata</taxon>
        <taxon>Craniata</taxon>
        <taxon>Vertebrata</taxon>
        <taxon>Euteleostomi</taxon>
        <taxon>Mammalia</taxon>
        <taxon>Eutheria</taxon>
        <taxon>Laurasiatheria</taxon>
        <taxon>Artiodactyla</taxon>
        <taxon>Ruminantia</taxon>
        <taxon>Pecora</taxon>
        <taxon>Bovidae</taxon>
        <taxon>Bovinae</taxon>
        <taxon>Bos</taxon>
    </lineage>
</organism>
<accession>Q3SZD4</accession>
<feature type="chain" id="PRO_0000244453" description="WD repeat-containing protein 18">
    <location>
        <begin position="1"/>
        <end position="432"/>
    </location>
</feature>
<feature type="repeat" description="WD 1">
    <location>
        <begin position="36"/>
        <end position="75"/>
    </location>
</feature>
<feature type="repeat" description="WD 2">
    <location>
        <begin position="78"/>
        <end position="116"/>
    </location>
</feature>
<feature type="repeat" description="WD 3">
    <location>
        <begin position="119"/>
        <end position="158"/>
    </location>
</feature>
<feature type="repeat" description="WD 4">
    <location>
        <begin position="170"/>
        <end position="211"/>
    </location>
</feature>
<feature type="repeat" description="WD 5">
    <location>
        <begin position="213"/>
        <end position="257"/>
    </location>
</feature>
<feature type="repeat" description="WD 6">
    <location>
        <begin position="267"/>
        <end position="306"/>
    </location>
</feature>
<proteinExistence type="evidence at transcript level"/>
<sequence>MAAPMEVAVCTDSAAQLWSCVVWELHSGANLLTYRGGQAGPRGLALLNGEYLLAAQLGKNYICAWELQRKDQLQQKIMCPGPVTCLTTSPNGLYVLAGISENIYLWEVSTGNLLVILSRHYQDVSCLQFTGDSSHFISGGKDCLVLAWSLCSVLQADPSRTPAPRHVWSRHTLPITDLHCGFGGPLARVATASLDQTVKLWEVSSGELLLSVLFDVGILAVTMDLAEHYMFCGGSDGSIFQVDLCTWPGQREKSFQPEQEHGKVFRGHRNQVTCLSVSTDGSVLLSGSHDETVRLWDVQSQQCLRTVTLKGPVTNACIMLAPVSMLSSDFRPGLPLPHFNKHLLGAEHGDEPHRGGLMLRLGLHQQGSEPSYLERVEQLQAVMSSTLEKNVLGGQDQLRIRVTELEDEVRNLRKINRDLFDFSTRIITHPTK</sequence>